<comment type="similarity">
    <text evidence="2">Belongs to the REF/SRPP family.</text>
</comment>
<protein>
    <recommendedName>
        <fullName>REF/SRPP-like protein At2g47780</fullName>
    </recommendedName>
</protein>
<name>Y2778_ARATH</name>
<gene>
    <name type="ordered locus">At2g47780</name>
    <name type="ORF">F17A22.17</name>
</gene>
<keyword id="KW-1185">Reference proteome</keyword>
<sequence length="235" mass="26642">MAEDEIVVEEEQSQPQEITPVPPSSSSSPSLVVEDDDEMKLKHLEFIQVAAVYFAACFSTLYELAKDNAGPLKLGVENIEDCVRTVLAPLYEKFHDVPFKLLLFVDRKVDDVFFDVETYVPSLVKQASSQALTVATEVQRTGVVDTTKSIARSVRDKYEPAAEYYAATLWRLLNQLPLFPEVAHLVIPTAFYWSEKYNDAVRYVGDRDYFGAEYLPMIPIEKISDILEQDQCRAD</sequence>
<accession>O82246</accession>
<feature type="chain" id="PRO_0000221065" description="REF/SRPP-like protein At2g47780">
    <location>
        <begin position="1"/>
        <end position="235"/>
    </location>
</feature>
<feature type="region of interest" description="Disordered" evidence="1">
    <location>
        <begin position="1"/>
        <end position="32"/>
    </location>
</feature>
<feature type="compositionally biased region" description="Acidic residues" evidence="1">
    <location>
        <begin position="1"/>
        <end position="12"/>
    </location>
</feature>
<reference key="1">
    <citation type="journal article" date="1999" name="Nature">
        <title>Sequence and analysis of chromosome 2 of the plant Arabidopsis thaliana.</title>
        <authorList>
            <person name="Lin X."/>
            <person name="Kaul S."/>
            <person name="Rounsley S.D."/>
            <person name="Shea T.P."/>
            <person name="Benito M.-I."/>
            <person name="Town C.D."/>
            <person name="Fujii C.Y."/>
            <person name="Mason T.M."/>
            <person name="Bowman C.L."/>
            <person name="Barnstead M.E."/>
            <person name="Feldblyum T.V."/>
            <person name="Buell C.R."/>
            <person name="Ketchum K.A."/>
            <person name="Lee J.J."/>
            <person name="Ronning C.M."/>
            <person name="Koo H.L."/>
            <person name="Moffat K.S."/>
            <person name="Cronin L.A."/>
            <person name="Shen M."/>
            <person name="Pai G."/>
            <person name="Van Aken S."/>
            <person name="Umayam L."/>
            <person name="Tallon L.J."/>
            <person name="Gill J.E."/>
            <person name="Adams M.D."/>
            <person name="Carrera A.J."/>
            <person name="Creasy T.H."/>
            <person name="Goodman H.M."/>
            <person name="Somerville C.R."/>
            <person name="Copenhaver G.P."/>
            <person name="Preuss D."/>
            <person name="Nierman W.C."/>
            <person name="White O."/>
            <person name="Eisen J.A."/>
            <person name="Salzberg S.L."/>
            <person name="Fraser C.M."/>
            <person name="Venter J.C."/>
        </authorList>
    </citation>
    <scope>NUCLEOTIDE SEQUENCE [LARGE SCALE GENOMIC DNA]</scope>
    <source>
        <strain>cv. Columbia</strain>
    </source>
</reference>
<reference key="2">
    <citation type="journal article" date="2017" name="Plant J.">
        <title>Araport11: a complete reannotation of the Arabidopsis thaliana reference genome.</title>
        <authorList>
            <person name="Cheng C.Y."/>
            <person name="Krishnakumar V."/>
            <person name="Chan A.P."/>
            <person name="Thibaud-Nissen F."/>
            <person name="Schobel S."/>
            <person name="Town C.D."/>
        </authorList>
    </citation>
    <scope>GENOME REANNOTATION</scope>
    <source>
        <strain>cv. Columbia</strain>
    </source>
</reference>
<reference key="3">
    <citation type="journal article" date="2003" name="Science">
        <title>Empirical analysis of transcriptional activity in the Arabidopsis genome.</title>
        <authorList>
            <person name="Yamada K."/>
            <person name="Lim J."/>
            <person name="Dale J.M."/>
            <person name="Chen H."/>
            <person name="Shinn P."/>
            <person name="Palm C.J."/>
            <person name="Southwick A.M."/>
            <person name="Wu H.C."/>
            <person name="Kim C.J."/>
            <person name="Nguyen M."/>
            <person name="Pham P.K."/>
            <person name="Cheuk R.F."/>
            <person name="Karlin-Newmann G."/>
            <person name="Liu S.X."/>
            <person name="Lam B."/>
            <person name="Sakano H."/>
            <person name="Wu T."/>
            <person name="Yu G."/>
            <person name="Miranda M."/>
            <person name="Quach H.L."/>
            <person name="Tripp M."/>
            <person name="Chang C.H."/>
            <person name="Lee J.M."/>
            <person name="Toriumi M.J."/>
            <person name="Chan M.M."/>
            <person name="Tang C.C."/>
            <person name="Onodera C.S."/>
            <person name="Deng J.M."/>
            <person name="Akiyama K."/>
            <person name="Ansari Y."/>
            <person name="Arakawa T."/>
            <person name="Banh J."/>
            <person name="Banno F."/>
            <person name="Bowser L."/>
            <person name="Brooks S.Y."/>
            <person name="Carninci P."/>
            <person name="Chao Q."/>
            <person name="Choy N."/>
            <person name="Enju A."/>
            <person name="Goldsmith A.D."/>
            <person name="Gurjal M."/>
            <person name="Hansen N.F."/>
            <person name="Hayashizaki Y."/>
            <person name="Johnson-Hopson C."/>
            <person name="Hsuan V.W."/>
            <person name="Iida K."/>
            <person name="Karnes M."/>
            <person name="Khan S."/>
            <person name="Koesema E."/>
            <person name="Ishida J."/>
            <person name="Jiang P.X."/>
            <person name="Jones T."/>
            <person name="Kawai J."/>
            <person name="Kamiya A."/>
            <person name="Meyers C."/>
            <person name="Nakajima M."/>
            <person name="Narusaka M."/>
            <person name="Seki M."/>
            <person name="Sakurai T."/>
            <person name="Satou M."/>
            <person name="Tamse R."/>
            <person name="Vaysberg M."/>
            <person name="Wallender E.K."/>
            <person name="Wong C."/>
            <person name="Yamamura Y."/>
            <person name="Yuan S."/>
            <person name="Shinozaki K."/>
            <person name="Davis R.W."/>
            <person name="Theologis A."/>
            <person name="Ecker J.R."/>
        </authorList>
    </citation>
    <scope>NUCLEOTIDE SEQUENCE [LARGE SCALE MRNA]</scope>
    <source>
        <strain>cv. Columbia</strain>
    </source>
</reference>
<organism>
    <name type="scientific">Arabidopsis thaliana</name>
    <name type="common">Mouse-ear cress</name>
    <dbReference type="NCBI Taxonomy" id="3702"/>
    <lineage>
        <taxon>Eukaryota</taxon>
        <taxon>Viridiplantae</taxon>
        <taxon>Streptophyta</taxon>
        <taxon>Embryophyta</taxon>
        <taxon>Tracheophyta</taxon>
        <taxon>Spermatophyta</taxon>
        <taxon>Magnoliopsida</taxon>
        <taxon>eudicotyledons</taxon>
        <taxon>Gunneridae</taxon>
        <taxon>Pentapetalae</taxon>
        <taxon>rosids</taxon>
        <taxon>malvids</taxon>
        <taxon>Brassicales</taxon>
        <taxon>Brassicaceae</taxon>
        <taxon>Camelineae</taxon>
        <taxon>Arabidopsis</taxon>
    </lineage>
</organism>
<evidence type="ECO:0000256" key="1">
    <source>
        <dbReference type="SAM" id="MobiDB-lite"/>
    </source>
</evidence>
<evidence type="ECO:0000305" key="2"/>
<proteinExistence type="evidence at transcript level"/>
<dbReference type="EMBL" id="AC005309">
    <property type="protein sequence ID" value="AAC63633.1"/>
    <property type="molecule type" value="Genomic_DNA"/>
</dbReference>
<dbReference type="EMBL" id="CP002685">
    <property type="protein sequence ID" value="AEC10887.1"/>
    <property type="molecule type" value="Genomic_DNA"/>
</dbReference>
<dbReference type="EMBL" id="BT000468">
    <property type="protein sequence ID" value="AAN17445.1"/>
    <property type="molecule type" value="mRNA"/>
</dbReference>
<dbReference type="EMBL" id="BT002146">
    <property type="protein sequence ID" value="AAN72157.1"/>
    <property type="molecule type" value="mRNA"/>
</dbReference>
<dbReference type="PIR" id="D84919">
    <property type="entry name" value="D84919"/>
</dbReference>
<dbReference type="RefSeq" id="NP_182299.1">
    <property type="nucleotide sequence ID" value="NM_130345.5"/>
</dbReference>
<dbReference type="FunCoup" id="O82246">
    <property type="interactions" value="1"/>
</dbReference>
<dbReference type="STRING" id="3702.O82246"/>
<dbReference type="PaxDb" id="3702-AT2G47780.1"/>
<dbReference type="ProteomicsDB" id="232350"/>
<dbReference type="EnsemblPlants" id="AT2G47780.1">
    <property type="protein sequence ID" value="AT2G47780.1"/>
    <property type="gene ID" value="AT2G47780"/>
</dbReference>
<dbReference type="GeneID" id="819390"/>
<dbReference type="Gramene" id="AT2G47780.1">
    <property type="protein sequence ID" value="AT2G47780.1"/>
    <property type="gene ID" value="AT2G47780"/>
</dbReference>
<dbReference type="KEGG" id="ath:AT2G47780"/>
<dbReference type="Araport" id="AT2G47780"/>
<dbReference type="TAIR" id="AT2G47780">
    <property type="gene designation" value="LDAP2"/>
</dbReference>
<dbReference type="eggNOG" id="ENOG502QUI7">
    <property type="taxonomic scope" value="Eukaryota"/>
</dbReference>
<dbReference type="HOGENOM" id="CLU_069928_1_0_1"/>
<dbReference type="InParanoid" id="O82246"/>
<dbReference type="OMA" id="FHDVPFK"/>
<dbReference type="OrthoDB" id="1905464at2759"/>
<dbReference type="PhylomeDB" id="O82246"/>
<dbReference type="PRO" id="PR:O82246"/>
<dbReference type="Proteomes" id="UP000006548">
    <property type="component" value="Chromosome 2"/>
</dbReference>
<dbReference type="ExpressionAtlas" id="O82246">
    <property type="expression patterns" value="baseline and differential"/>
</dbReference>
<dbReference type="GO" id="GO:0005811">
    <property type="term" value="C:lipid droplet"/>
    <property type="evidence" value="ECO:0000314"/>
    <property type="project" value="TAIR"/>
</dbReference>
<dbReference type="GO" id="GO:0080186">
    <property type="term" value="P:developmental vegetative growth"/>
    <property type="evidence" value="ECO:0000315"/>
    <property type="project" value="TAIR"/>
</dbReference>
<dbReference type="GO" id="GO:0034389">
    <property type="term" value="P:lipid droplet organization"/>
    <property type="evidence" value="ECO:0000315"/>
    <property type="project" value="TAIR"/>
</dbReference>
<dbReference type="GO" id="GO:0045927">
    <property type="term" value="P:positive regulation of growth"/>
    <property type="evidence" value="ECO:0000315"/>
    <property type="project" value="TAIR"/>
</dbReference>
<dbReference type="GO" id="GO:1902584">
    <property type="term" value="P:positive regulation of response to water deprivation"/>
    <property type="evidence" value="ECO:0000315"/>
    <property type="project" value="TAIR"/>
</dbReference>
<dbReference type="InterPro" id="IPR008802">
    <property type="entry name" value="REF"/>
</dbReference>
<dbReference type="PANTHER" id="PTHR33732:SF3">
    <property type="entry name" value="OS07G0671800 PROTEIN"/>
    <property type="match status" value="1"/>
</dbReference>
<dbReference type="PANTHER" id="PTHR33732">
    <property type="entry name" value="REF/SRPP-LIKE PROTEIN OS05G0151300/LOC_OS05G05940"/>
    <property type="match status" value="1"/>
</dbReference>
<dbReference type="Pfam" id="PF05755">
    <property type="entry name" value="REF"/>
    <property type="match status" value="1"/>
</dbReference>